<evidence type="ECO:0000255" key="1">
    <source>
        <dbReference type="HAMAP-Rule" id="MF_01224"/>
    </source>
</evidence>
<evidence type="ECO:0000256" key="2">
    <source>
        <dbReference type="SAM" id="MobiDB-lite"/>
    </source>
</evidence>
<proteinExistence type="inferred from homology"/>
<name>MOAC3_MYCBO</name>
<organism>
    <name type="scientific">Mycobacterium bovis (strain ATCC BAA-935 / AF2122/97)</name>
    <dbReference type="NCBI Taxonomy" id="233413"/>
    <lineage>
        <taxon>Bacteria</taxon>
        <taxon>Bacillati</taxon>
        <taxon>Actinomycetota</taxon>
        <taxon>Actinomycetes</taxon>
        <taxon>Mycobacteriales</taxon>
        <taxon>Mycobacteriaceae</taxon>
        <taxon>Mycobacterium</taxon>
        <taxon>Mycobacterium tuberculosis complex</taxon>
    </lineage>
</organism>
<sequence>MNDHDGVLTHLDEQGAARMVDVSAKAVTLRRARASGAVLMKPSTLDMICHGTAAKGDVIATARIAGIMAAKRTGELIPLCHPLGIEAVTVTLEPQGADRLSIAATVTTVARTGVEMEALTAVTVTALTVYDMCKAVDRAMTITDIRLDEKSGGRSGHYRRHDADVKPSDGGSTEDGC</sequence>
<feature type="chain" id="PRO_0000097815" description="Cyclic pyranopterin monophosphate synthase 3">
    <location>
        <begin position="1"/>
        <end position="177"/>
    </location>
</feature>
<feature type="region of interest" description="Disordered" evidence="2">
    <location>
        <begin position="150"/>
        <end position="177"/>
    </location>
</feature>
<feature type="active site" evidence="1">
    <location>
        <position position="131"/>
    </location>
</feature>
<feature type="binding site" evidence="1">
    <location>
        <begin position="79"/>
        <end position="81"/>
    </location>
    <ligand>
        <name>substrate</name>
    </ligand>
</feature>
<feature type="binding site" evidence="1">
    <location>
        <begin position="116"/>
        <end position="117"/>
    </location>
    <ligand>
        <name>substrate</name>
    </ligand>
</feature>
<keyword id="KW-0456">Lyase</keyword>
<keyword id="KW-0501">Molybdenum cofactor biosynthesis</keyword>
<keyword id="KW-1185">Reference proteome</keyword>
<protein>
    <recommendedName>
        <fullName evidence="1">Cyclic pyranopterin monophosphate synthase 3</fullName>
        <ecNumber evidence="1">4.6.1.17</ecNumber>
    </recommendedName>
    <alternativeName>
        <fullName evidence="1">Molybdenum cofactor biosynthesis protein C 3</fullName>
    </alternativeName>
</protein>
<reference key="1">
    <citation type="journal article" date="2003" name="Proc. Natl. Acad. Sci. U.S.A.">
        <title>The complete genome sequence of Mycobacterium bovis.</title>
        <authorList>
            <person name="Garnier T."/>
            <person name="Eiglmeier K."/>
            <person name="Camus J.-C."/>
            <person name="Medina N."/>
            <person name="Mansoor H."/>
            <person name="Pryor M."/>
            <person name="Duthoy S."/>
            <person name="Grondin S."/>
            <person name="Lacroix C."/>
            <person name="Monsempe C."/>
            <person name="Simon S."/>
            <person name="Harris B."/>
            <person name="Atkin R."/>
            <person name="Doggett J."/>
            <person name="Mayes R."/>
            <person name="Keating L."/>
            <person name="Wheeler P.R."/>
            <person name="Parkhill J."/>
            <person name="Barrell B.G."/>
            <person name="Cole S.T."/>
            <person name="Gordon S.V."/>
            <person name="Hewinson R.G."/>
        </authorList>
    </citation>
    <scope>NUCLEOTIDE SEQUENCE [LARGE SCALE GENOMIC DNA]</scope>
    <source>
        <strain>ATCC BAA-935 / AF2122/97</strain>
    </source>
</reference>
<reference key="2">
    <citation type="journal article" date="2017" name="Genome Announc.">
        <title>Updated reference genome sequence and annotation of Mycobacterium bovis AF2122/97.</title>
        <authorList>
            <person name="Malone K.M."/>
            <person name="Farrell D."/>
            <person name="Stuber T.P."/>
            <person name="Schubert O.T."/>
            <person name="Aebersold R."/>
            <person name="Robbe-Austerman S."/>
            <person name="Gordon S.V."/>
        </authorList>
    </citation>
    <scope>NUCLEOTIDE SEQUENCE [LARGE SCALE GENOMIC DNA]</scope>
    <scope>GENOME REANNOTATION</scope>
    <source>
        <strain>ATCC BAA-935 / AF2122/97</strain>
    </source>
</reference>
<gene>
    <name type="primary">moaC3</name>
    <name type="ordered locus">BQ2027_MB3353C</name>
</gene>
<dbReference type="EC" id="4.6.1.17" evidence="1"/>
<dbReference type="EMBL" id="LT708304">
    <property type="protein sequence ID" value="SIU01982.1"/>
    <property type="molecule type" value="Genomic_DNA"/>
</dbReference>
<dbReference type="SMR" id="P65393"/>
<dbReference type="KEGG" id="mbo:BQ2027_MB3353C"/>
<dbReference type="UniPathway" id="UPA00344"/>
<dbReference type="Proteomes" id="UP000001419">
    <property type="component" value="Chromosome"/>
</dbReference>
<dbReference type="GO" id="GO:0061799">
    <property type="term" value="F:cyclic pyranopterin monophosphate synthase activity"/>
    <property type="evidence" value="ECO:0007669"/>
    <property type="project" value="UniProtKB-UniRule"/>
</dbReference>
<dbReference type="GO" id="GO:0006777">
    <property type="term" value="P:Mo-molybdopterin cofactor biosynthetic process"/>
    <property type="evidence" value="ECO:0007669"/>
    <property type="project" value="UniProtKB-UniRule"/>
</dbReference>
<dbReference type="CDD" id="cd01420">
    <property type="entry name" value="MoaC_PE"/>
    <property type="match status" value="1"/>
</dbReference>
<dbReference type="Gene3D" id="3.30.70.640">
    <property type="entry name" value="Molybdopterin cofactor biosynthesis C (MoaC) domain"/>
    <property type="match status" value="1"/>
</dbReference>
<dbReference type="HAMAP" id="MF_01224_B">
    <property type="entry name" value="MoaC_B"/>
    <property type="match status" value="1"/>
</dbReference>
<dbReference type="InterPro" id="IPR023045">
    <property type="entry name" value="MoaC"/>
</dbReference>
<dbReference type="InterPro" id="IPR047594">
    <property type="entry name" value="MoaC_bact/euk"/>
</dbReference>
<dbReference type="InterPro" id="IPR036522">
    <property type="entry name" value="MoaC_sf"/>
</dbReference>
<dbReference type="InterPro" id="IPR050105">
    <property type="entry name" value="MoCo_biosynth_MoaA/MoaC"/>
</dbReference>
<dbReference type="InterPro" id="IPR002820">
    <property type="entry name" value="Mopterin_CF_biosynth-C_dom"/>
</dbReference>
<dbReference type="NCBIfam" id="TIGR00581">
    <property type="entry name" value="moaC"/>
    <property type="match status" value="1"/>
</dbReference>
<dbReference type="NCBIfam" id="NF006870">
    <property type="entry name" value="PRK09364.1"/>
    <property type="match status" value="1"/>
</dbReference>
<dbReference type="PANTHER" id="PTHR22960:SF29">
    <property type="entry name" value="CYCLIC PYRANOPTERIN MONOPHOSPHATE SYNTHASE"/>
    <property type="match status" value="1"/>
</dbReference>
<dbReference type="PANTHER" id="PTHR22960">
    <property type="entry name" value="MOLYBDOPTERIN COFACTOR SYNTHESIS PROTEIN A"/>
    <property type="match status" value="1"/>
</dbReference>
<dbReference type="Pfam" id="PF01967">
    <property type="entry name" value="MoaC"/>
    <property type="match status" value="1"/>
</dbReference>
<dbReference type="SUPFAM" id="SSF55040">
    <property type="entry name" value="Molybdenum cofactor biosynthesis protein C, MoaC"/>
    <property type="match status" value="1"/>
</dbReference>
<accession>P65393</accession>
<accession>A0A1R3Y3T3</accession>
<accession>O53376</accession>
<accession>X2BNL6</accession>
<comment type="function">
    <text evidence="1">Catalyzes the conversion of (8S)-3',8-cyclo-7,8-dihydroguanosine 5'-triphosphate to cyclic pyranopterin monophosphate (cPMP).</text>
</comment>
<comment type="catalytic activity">
    <reaction evidence="1">
        <text>(8S)-3',8-cyclo-7,8-dihydroguanosine 5'-triphosphate = cyclic pyranopterin phosphate + diphosphate</text>
        <dbReference type="Rhea" id="RHEA:49580"/>
        <dbReference type="ChEBI" id="CHEBI:33019"/>
        <dbReference type="ChEBI" id="CHEBI:59648"/>
        <dbReference type="ChEBI" id="CHEBI:131766"/>
        <dbReference type="EC" id="4.6.1.17"/>
    </reaction>
</comment>
<comment type="pathway">
    <text evidence="1">Cofactor biosynthesis; molybdopterin biosynthesis.</text>
</comment>
<comment type="subunit">
    <text evidence="1">Homohexamer; trimer of dimers.</text>
</comment>
<comment type="similarity">
    <text evidence="1">Belongs to the MoaC family.</text>
</comment>